<keyword id="KW-0133">Cell shape</keyword>
<keyword id="KW-1015">Disulfide bond</keyword>
<keyword id="KW-0574">Periplasm</keyword>
<keyword id="KW-0732">Signal</keyword>
<reference key="1">
    <citation type="journal article" date="1990" name="Nucleic Acids Res.">
        <title>The nucleotide sequence of the 60 kDa cysteine rich outer membrane protein of Chlamydia pneumoniae strain IOL-207.</title>
        <authorList>
            <person name="Watson M.W."/>
            <person name="Al-Mahdawi S."/>
            <person name="Lamden P.R."/>
            <person name="Clarke I.N."/>
        </authorList>
    </citation>
    <scope>NUCLEOTIDE SEQUENCE [GENOMIC DNA]</scope>
    <source>
        <strain>IOL-207</strain>
    </source>
</reference>
<reference key="2">
    <citation type="journal article" date="1995" name="Microbiology">
        <title>The CrP operon of Chlamydia psittaci and Chlamydia pneumoniae.</title>
        <authorList>
            <person name="Watson M.W."/>
            <person name="Clarke I.N."/>
            <person name="Everson J.S."/>
            <person name="Lambden P.R."/>
        </authorList>
    </citation>
    <scope>NUCLEOTIDE SEQUENCE [GENOMIC DNA]</scope>
    <scope>DEVELOPMENTAL STAGE</scope>
    <source>
        <strain>IOL-207</strain>
    </source>
</reference>
<reference key="3">
    <citation type="journal article" date="1999" name="Nat. Genet.">
        <title>Comparative genomes of Chlamydia pneumoniae and C. trachomatis.</title>
        <authorList>
            <person name="Kalman S."/>
            <person name="Mitchell W.P."/>
            <person name="Marathe R."/>
            <person name="Lammel C.J."/>
            <person name="Fan J."/>
            <person name="Hyman R.W."/>
            <person name="Olinger L."/>
            <person name="Grimwood J."/>
            <person name="Davis R.W."/>
            <person name="Stephens R.S."/>
        </authorList>
    </citation>
    <scope>NUCLEOTIDE SEQUENCE [LARGE SCALE GENOMIC DNA]</scope>
    <source>
        <strain>CWL029</strain>
    </source>
</reference>
<reference key="4">
    <citation type="journal article" date="2000" name="Nucleic Acids Res.">
        <title>Genome sequences of Chlamydia trachomatis MoPn and Chlamydia pneumoniae AR39.</title>
        <authorList>
            <person name="Read T.D."/>
            <person name="Brunham R.C."/>
            <person name="Shen C."/>
            <person name="Gill S.R."/>
            <person name="Heidelberg J.F."/>
            <person name="White O."/>
            <person name="Hickey E.K."/>
            <person name="Peterson J.D."/>
            <person name="Utterback T.R."/>
            <person name="Berry K.J."/>
            <person name="Bass S."/>
            <person name="Linher K.D."/>
            <person name="Weidman J.F."/>
            <person name="Khouri H.M."/>
            <person name="Craven B."/>
            <person name="Bowman C."/>
            <person name="Dodson R.J."/>
            <person name="Gwinn M.L."/>
            <person name="Nelson W.C."/>
            <person name="DeBoy R.T."/>
            <person name="Kolonay J.F."/>
            <person name="McClarty G."/>
            <person name="Salzberg S.L."/>
            <person name="Eisen J.A."/>
            <person name="Fraser C.M."/>
        </authorList>
    </citation>
    <scope>NUCLEOTIDE SEQUENCE [LARGE SCALE GENOMIC DNA]</scope>
    <source>
        <strain>AR39</strain>
    </source>
</reference>
<reference key="5">
    <citation type="journal article" date="2000" name="Nucleic Acids Res.">
        <title>Comparison of whole genome sequences of Chlamydia pneumoniae J138 from Japan and CWL029 from USA.</title>
        <authorList>
            <person name="Shirai M."/>
            <person name="Hirakawa H."/>
            <person name="Kimoto M."/>
            <person name="Tabuchi M."/>
            <person name="Kishi F."/>
            <person name="Ouchi K."/>
            <person name="Shiba T."/>
            <person name="Ishii K."/>
            <person name="Hattori M."/>
            <person name="Kuhara S."/>
            <person name="Nakazawa T."/>
        </authorList>
    </citation>
    <scope>NUCLEOTIDE SEQUENCE [LARGE SCALE GENOMIC DNA]</scope>
    <source>
        <strain>J138</strain>
    </source>
</reference>
<reference key="6">
    <citation type="journal article" date="2000" name="J. Infect. Dis. 181 Suppl.">
        <title>Comparison of outer membrane protein genes omp and pmp in the whole genome sequences of Chlamydia pneumoniae isolates from Japan and the United States.</title>
        <authorList>
            <person name="Shirai M."/>
            <person name="Hirakawa H."/>
            <person name="Ouchi K."/>
            <person name="Tabuchi M."/>
            <person name="Kishi F."/>
            <person name="Kimoto M."/>
            <person name="Takeuchi H."/>
            <person name="Nishida J."/>
            <person name="Shibata K."/>
            <person name="Fujinaga R."/>
            <person name="Yoneda H."/>
            <person name="Matsushima H."/>
            <person name="Tanaka C."/>
            <person name="Furukawa S."/>
            <person name="Miura K."/>
            <person name="Nakazawa A."/>
            <person name="Ishii K."/>
            <person name="Shiba T."/>
            <person name="Hattori M."/>
            <person name="Kuhara S."/>
            <person name="Nakazawa T."/>
        </authorList>
    </citation>
    <scope>NUCLEOTIDE SEQUENCE [LARGE SCALE GENOMIC DNA]</scope>
    <scope>DISCUSSION OF SEQUENCE</scope>
    <source>
        <strain>J138</strain>
    </source>
</reference>
<reference key="7">
    <citation type="submission" date="2002-05" db="EMBL/GenBank/DDBJ databases">
        <title>The genome sequence of Chlamydia pneumoniae TW183 and comparison with other Chlamydia strains based on whole genome sequence analysis.</title>
        <authorList>
            <person name="Geng M.M."/>
            <person name="Schuhmacher A."/>
            <person name="Muehldorfer I."/>
            <person name="Bensch K.W."/>
            <person name="Schaefer K.P."/>
            <person name="Schneider S."/>
            <person name="Pohl T."/>
            <person name="Essig A."/>
            <person name="Marre R."/>
            <person name="Melchers K."/>
        </authorList>
    </citation>
    <scope>NUCLEOTIDE SEQUENCE [LARGE SCALE GENOMIC DNA]</scope>
    <source>
        <strain>TW-183</strain>
    </source>
</reference>
<feature type="signal peptide" evidence="2">
    <location>
        <begin position="1"/>
        <end position="22"/>
    </location>
</feature>
<feature type="propeptide" id="PRO_0000020164" evidence="2">
    <location>
        <begin position="23"/>
        <end position="40"/>
    </location>
</feature>
<feature type="chain" id="PRO_0000020165" description="Large cysteine-rich periplasmic protein OmcB">
    <location>
        <begin position="41"/>
        <end position="556"/>
    </location>
</feature>
<feature type="sequence conflict" description="In Ref. 6; AAP98508." evidence="4" ref="6">
    <original>T</original>
    <variation>I</variation>
    <location>
        <position position="412"/>
    </location>
</feature>
<sequence length="556" mass="59719">MSKLIRRVVTVLALTSMASCFASGGIEAAVAESLITKIVASAETKPAPVPMTAKKVRLVRRNKQPVEQKSRGAFCDKEFYPCEEGRCQPVEAQQESCYGRLYSVKVNDDCNVEICQSVPEYATVGSPYPIEILAIGKKDCVDVVITQQLPCEAEFVSSDPETTPTSDGKLVWKIDRLGAGDKCKITVWVKPLKEGCCFTAATVCACPELRSYTKCGQPAICIKQEGPDCACLRCPVCYKIEVVNTGSAIARNVTVDNPVPDGYSHASGQRVLSFNLGDMRPGDKKVFTVEFCPQRRGQITNVATVTYCGGHKCSANVTTVVNEPCVQVNISGADWSYVCKPVEYSISVSNPGDLVLHDVVIQDTLPSGVTVLEAPGGEICCNKVVWRIKEMCPGETLQFKLVVKAQVPGRFTNQVAVTSESNCGTCTSCAETTTHWKGLAATHMCVLDTNDPICVGENTVYRICVTNRGSAEDTNVSLILKFSKELQPIASSGPTKGTISGNTVVFDALPKLGSKESVEFSVTLKGIAPGDARGEAILSSDTLTSPVSDTENTHVY</sequence>
<protein>
    <recommendedName>
        <fullName>Large cysteine-rich periplasmic protein OmcB</fullName>
        <shortName>Large-CRP</shortName>
    </recommendedName>
    <alternativeName>
        <fullName>60 kDa cysteine-rich OMP</fullName>
        <shortName>60 kDa CRP</shortName>
    </alternativeName>
    <alternativeName>
        <fullName>60 kDa outer membrane protein</fullName>
    </alternativeName>
    <alternativeName>
        <fullName>Cysteine-rich outer membrane protein</fullName>
    </alternativeName>
</protein>
<gene>
    <name type="primary">omcB</name>
    <name type="synonym">omp2</name>
    <name type="ordered locus">CPn_0557</name>
    <name type="ordered locus">CP_0195</name>
    <name type="ordered locus">CpB0579</name>
</gene>
<comment type="function">
    <text evidence="1">In elementary bodies (EBs, the infectious stage, which is able to survive outside the host cell) provides the structural integrity of the outer envelope through disulfide cross-links with the small cysteine-rich protein and the major outer membrane porin. It has been described in publications as the Sarkosyl-insoluble COMC (Chlamydia outer membrane complex), and serves as the functional equivalent of peptidoglycan (By similarity).</text>
</comment>
<comment type="subunit">
    <text evidence="1">Part of a disulfide cross-linked outer membrane complex (COMC) composed of the major outer membrane porin (MOMP), the small cysteine-rich protein (OmcA) and the large cysteine-rich periplasmic protein (OmcB).</text>
</comment>
<comment type="subcellular location">
    <subcellularLocation>
        <location evidence="4">Periplasm</location>
    </subcellularLocation>
</comment>
<comment type="developmental stage">
    <text evidence="3">It is present but the disulfide bonds are reduced in the intracellular reticulate bodies (RBs).</text>
</comment>
<comment type="caution">
    <text evidence="4">Was thought to be an outer membrane protein as it is part of a disulfide cross-linked complex that is insoluble in the detergent Sarkosyl; however based on experiments in C.psittaci it is likely to be periplasmic.</text>
</comment>
<dbReference type="EMBL" id="X53511">
    <property type="protein sequence ID" value="CAA37590.1"/>
    <property type="molecule type" value="Genomic_DNA"/>
</dbReference>
<dbReference type="EMBL" id="AE001363">
    <property type="protein sequence ID" value="AAD18697.1"/>
    <property type="molecule type" value="Genomic_DNA"/>
</dbReference>
<dbReference type="EMBL" id="AE002161">
    <property type="protein sequence ID" value="AAF38068.1"/>
    <property type="molecule type" value="Genomic_DNA"/>
</dbReference>
<dbReference type="EMBL" id="BA000008">
    <property type="protein sequence ID" value="BAA98763.1"/>
    <property type="molecule type" value="Genomic_DNA"/>
</dbReference>
<dbReference type="EMBL" id="AE009440">
    <property type="protein sequence ID" value="AAP98508.1"/>
    <property type="molecule type" value="Genomic_DNA"/>
</dbReference>
<dbReference type="PIR" id="A86560">
    <property type="entry name" value="A86560"/>
</dbReference>
<dbReference type="PIR" id="S12602">
    <property type="entry name" value="S12602"/>
</dbReference>
<dbReference type="RefSeq" id="NP_224753.1">
    <property type="nucleotide sequence ID" value="NC_000922.1"/>
</dbReference>
<dbReference type="RefSeq" id="WP_010883195.1">
    <property type="nucleotide sequence ID" value="NZ_LN847257.1"/>
</dbReference>
<dbReference type="STRING" id="406984.CPK_ORF01071"/>
<dbReference type="GeneID" id="45050601"/>
<dbReference type="KEGG" id="cpa:CP_0195"/>
<dbReference type="KEGG" id="cpj:omcB"/>
<dbReference type="KEGG" id="cpn:CPn_0557"/>
<dbReference type="KEGG" id="cpt:CpB0579"/>
<dbReference type="PATRIC" id="fig|115713.3.peg.618"/>
<dbReference type="eggNOG" id="COG1361">
    <property type="taxonomic scope" value="Bacteria"/>
</dbReference>
<dbReference type="HOGENOM" id="CLU_029611_0_0_0"/>
<dbReference type="OrthoDB" id="16744at2"/>
<dbReference type="Proteomes" id="UP000000583">
    <property type="component" value="Chromosome"/>
</dbReference>
<dbReference type="Proteomes" id="UP000000801">
    <property type="component" value="Chromosome"/>
</dbReference>
<dbReference type="GO" id="GO:0042597">
    <property type="term" value="C:periplasmic space"/>
    <property type="evidence" value="ECO:0007669"/>
    <property type="project" value="UniProtKB-SubCell"/>
</dbReference>
<dbReference type="GO" id="GO:0005201">
    <property type="term" value="F:extracellular matrix structural constituent"/>
    <property type="evidence" value="ECO:0007669"/>
    <property type="project" value="InterPro"/>
</dbReference>
<dbReference type="GO" id="GO:0008360">
    <property type="term" value="P:regulation of cell shape"/>
    <property type="evidence" value="ECO:0007669"/>
    <property type="project" value="UniProtKB-KW"/>
</dbReference>
<dbReference type="InterPro" id="IPR003506">
    <property type="entry name" value="Chlam_OMP6"/>
</dbReference>
<dbReference type="InterPro" id="IPR051172">
    <property type="entry name" value="Chlamydia_OmcB"/>
</dbReference>
<dbReference type="InterPro" id="IPR047589">
    <property type="entry name" value="DUF11_rpt"/>
</dbReference>
<dbReference type="InterPro" id="IPR001434">
    <property type="entry name" value="OmcB-like_DUF11"/>
</dbReference>
<dbReference type="NCBIfam" id="TIGR01451">
    <property type="entry name" value="B_ant_repeat"/>
    <property type="match status" value="1"/>
</dbReference>
<dbReference type="PANTHER" id="PTHR34819">
    <property type="entry name" value="LARGE CYSTEINE-RICH PERIPLASMIC PROTEIN OMCB"/>
    <property type="match status" value="1"/>
</dbReference>
<dbReference type="PANTHER" id="PTHR34819:SF4">
    <property type="entry name" value="LARGE CYSTEINE-RICH PERIPLASMIC PROTEIN OMCB"/>
    <property type="match status" value="1"/>
</dbReference>
<dbReference type="Pfam" id="PF03504">
    <property type="entry name" value="Chlam_OMP6"/>
    <property type="match status" value="1"/>
</dbReference>
<dbReference type="Pfam" id="PF01345">
    <property type="entry name" value="DUF11"/>
    <property type="match status" value="3"/>
</dbReference>
<dbReference type="PRINTS" id="PR01336">
    <property type="entry name" value="CHLAMIDIAOM6"/>
</dbReference>
<name>OMCB_CHLPN</name>
<proteinExistence type="evidence at transcript level"/>
<evidence type="ECO:0000250" key="1"/>
<evidence type="ECO:0000255" key="2"/>
<evidence type="ECO:0000269" key="3">
    <source>
    </source>
</evidence>
<evidence type="ECO:0000305" key="4"/>
<accession>P23700</accession>
<accession>Q9JQI6</accession>
<organism>
    <name type="scientific">Chlamydia pneumoniae</name>
    <name type="common">Chlamydophila pneumoniae</name>
    <dbReference type="NCBI Taxonomy" id="83558"/>
    <lineage>
        <taxon>Bacteria</taxon>
        <taxon>Pseudomonadati</taxon>
        <taxon>Chlamydiota</taxon>
        <taxon>Chlamydiia</taxon>
        <taxon>Chlamydiales</taxon>
        <taxon>Chlamydiaceae</taxon>
        <taxon>Chlamydia/Chlamydophila group</taxon>
        <taxon>Chlamydia</taxon>
    </lineage>
</organism>